<keyword id="KW-0150">Chloroplast</keyword>
<keyword id="KW-0472">Membrane</keyword>
<keyword id="KW-0520">NAD</keyword>
<keyword id="KW-0521">NADP</keyword>
<keyword id="KW-0934">Plastid</keyword>
<keyword id="KW-0618">Plastoquinone</keyword>
<keyword id="KW-0874">Quinone</keyword>
<keyword id="KW-0793">Thylakoid</keyword>
<keyword id="KW-1278">Translocase</keyword>
<keyword id="KW-0812">Transmembrane</keyword>
<keyword id="KW-1133">Transmembrane helix</keyword>
<keyword id="KW-0813">Transport</keyword>
<evidence type="ECO:0000250" key="1"/>
<evidence type="ECO:0000255" key="2"/>
<evidence type="ECO:0000305" key="3"/>
<protein>
    <recommendedName>
        <fullName>NAD(P)H-quinone oxidoreductase subunit 5, chloroplastic</fullName>
        <ecNumber>7.1.1.-</ecNumber>
    </recommendedName>
    <alternativeName>
        <fullName>NAD(P)H dehydrogenase subunit 5</fullName>
    </alternativeName>
    <alternativeName>
        <fullName>NADH-plastoquinone oxidoreductase subunit 5</fullName>
    </alternativeName>
</protein>
<comment type="function">
    <text evidence="1">NDH shuttles electrons from NAD(P)H:plastoquinone, via FMN and iron-sulfur (Fe-S) centers, to quinones in the photosynthetic chain and possibly in a chloroplast respiratory chain. The immediate electron acceptor for the enzyme in this species is believed to be plastoquinone. Couples the redox reaction to proton translocation, and thus conserves the redox energy in a proton gradient (By similarity).</text>
</comment>
<comment type="catalytic activity">
    <reaction>
        <text>a plastoquinone + NADH + (n+1) H(+)(in) = a plastoquinol + NAD(+) + n H(+)(out)</text>
        <dbReference type="Rhea" id="RHEA:42608"/>
        <dbReference type="Rhea" id="RHEA-COMP:9561"/>
        <dbReference type="Rhea" id="RHEA-COMP:9562"/>
        <dbReference type="ChEBI" id="CHEBI:15378"/>
        <dbReference type="ChEBI" id="CHEBI:17757"/>
        <dbReference type="ChEBI" id="CHEBI:57540"/>
        <dbReference type="ChEBI" id="CHEBI:57945"/>
        <dbReference type="ChEBI" id="CHEBI:62192"/>
    </reaction>
</comment>
<comment type="catalytic activity">
    <reaction>
        <text>a plastoquinone + NADPH + (n+1) H(+)(in) = a plastoquinol + NADP(+) + n H(+)(out)</text>
        <dbReference type="Rhea" id="RHEA:42612"/>
        <dbReference type="Rhea" id="RHEA-COMP:9561"/>
        <dbReference type="Rhea" id="RHEA-COMP:9562"/>
        <dbReference type="ChEBI" id="CHEBI:15378"/>
        <dbReference type="ChEBI" id="CHEBI:17757"/>
        <dbReference type="ChEBI" id="CHEBI:57783"/>
        <dbReference type="ChEBI" id="CHEBI:58349"/>
        <dbReference type="ChEBI" id="CHEBI:62192"/>
    </reaction>
</comment>
<comment type="subunit">
    <text evidence="1">NDH is composed of at least 16 different subunits, 5 of which are encoded in the nucleus.</text>
</comment>
<comment type="subcellular location">
    <subcellularLocation>
        <location evidence="1">Plastid</location>
        <location evidence="1">Chloroplast thylakoid membrane</location>
        <topology evidence="1">Multi-pass membrane protein</topology>
    </subcellularLocation>
</comment>
<comment type="similarity">
    <text evidence="3">Belongs to the complex I subunit 5 family.</text>
</comment>
<gene>
    <name type="primary">ndhF</name>
</gene>
<reference key="1">
    <citation type="journal article" date="2008" name="Nucleic Acids Res.">
        <title>The complete nucleotide sequences of the five genetically distinct plastid genomes of Oenothera, subsection Oenothera: I. Sequence evaluation and plastome evolution.</title>
        <authorList>
            <person name="Greiner S."/>
            <person name="Wang X."/>
            <person name="Rauwolf U."/>
            <person name="Silber M.V."/>
            <person name="Mayer K."/>
            <person name="Meurer J."/>
            <person name="Haberer G."/>
            <person name="Herrmann R.G."/>
        </authorList>
    </citation>
    <scope>NUCLEOTIDE SEQUENCE [LARGE SCALE GENOMIC DNA]</scope>
    <source>
        <strain>cv. Douthat 1</strain>
    </source>
</reference>
<proteinExistence type="inferred from homology"/>
<geneLocation type="chloroplast"/>
<feature type="chain" id="PRO_0000360957" description="NAD(P)H-quinone oxidoreductase subunit 5, chloroplastic">
    <location>
        <begin position="1"/>
        <end position="772"/>
    </location>
</feature>
<feature type="transmembrane region" description="Helical" evidence="2">
    <location>
        <begin position="9"/>
        <end position="29"/>
    </location>
</feature>
<feature type="transmembrane region" description="Helical" evidence="2">
    <location>
        <begin position="40"/>
        <end position="60"/>
    </location>
</feature>
<feature type="transmembrane region" description="Helical" evidence="2">
    <location>
        <begin position="89"/>
        <end position="109"/>
    </location>
</feature>
<feature type="transmembrane region" description="Helical" evidence="2">
    <location>
        <begin position="125"/>
        <end position="145"/>
    </location>
</feature>
<feature type="transmembrane region" description="Helical" evidence="2">
    <location>
        <begin position="147"/>
        <end position="167"/>
    </location>
</feature>
<feature type="transmembrane region" description="Helical" evidence="2">
    <location>
        <begin position="185"/>
        <end position="205"/>
    </location>
</feature>
<feature type="transmembrane region" description="Helical" evidence="2">
    <location>
        <begin position="220"/>
        <end position="240"/>
    </location>
</feature>
<feature type="transmembrane region" description="Helical" evidence="2">
    <location>
        <begin position="259"/>
        <end position="279"/>
    </location>
</feature>
<feature type="transmembrane region" description="Helical" evidence="2">
    <location>
        <begin position="290"/>
        <end position="312"/>
    </location>
</feature>
<feature type="transmembrane region" description="Helical" evidence="2">
    <location>
        <begin position="328"/>
        <end position="348"/>
    </location>
</feature>
<feature type="transmembrane region" description="Helical" evidence="2">
    <location>
        <begin position="355"/>
        <end position="375"/>
    </location>
</feature>
<feature type="transmembrane region" description="Helical" evidence="2">
    <location>
        <begin position="397"/>
        <end position="417"/>
    </location>
</feature>
<feature type="transmembrane region" description="Helical" evidence="2">
    <location>
        <begin position="426"/>
        <end position="446"/>
    </location>
</feature>
<feature type="transmembrane region" description="Helical" evidence="2">
    <location>
        <begin position="550"/>
        <end position="570"/>
    </location>
</feature>
<feature type="transmembrane region" description="Helical" evidence="2">
    <location>
        <begin position="604"/>
        <end position="624"/>
    </location>
</feature>
<feature type="transmembrane region" description="Helical" evidence="2">
    <location>
        <begin position="731"/>
        <end position="751"/>
    </location>
</feature>
<dbReference type="EC" id="7.1.1.-"/>
<dbReference type="EMBL" id="EU262887">
    <property type="protein sequence ID" value="ABW98750.1"/>
    <property type="molecule type" value="Genomic_DNA"/>
</dbReference>
<dbReference type="RefSeq" id="YP_001687183.1">
    <property type="nucleotide sequence ID" value="NC_010358.2"/>
</dbReference>
<dbReference type="SMR" id="B0Z4S2"/>
<dbReference type="GeneID" id="5951867"/>
<dbReference type="GO" id="GO:0009535">
    <property type="term" value="C:chloroplast thylakoid membrane"/>
    <property type="evidence" value="ECO:0007669"/>
    <property type="project" value="UniProtKB-SubCell"/>
</dbReference>
<dbReference type="GO" id="GO:0008137">
    <property type="term" value="F:NADH dehydrogenase (ubiquinone) activity"/>
    <property type="evidence" value="ECO:0007669"/>
    <property type="project" value="InterPro"/>
</dbReference>
<dbReference type="GO" id="GO:0048038">
    <property type="term" value="F:quinone binding"/>
    <property type="evidence" value="ECO:0007669"/>
    <property type="project" value="UniProtKB-KW"/>
</dbReference>
<dbReference type="GO" id="GO:0042773">
    <property type="term" value="P:ATP synthesis coupled electron transport"/>
    <property type="evidence" value="ECO:0007669"/>
    <property type="project" value="InterPro"/>
</dbReference>
<dbReference type="GO" id="GO:0015990">
    <property type="term" value="P:electron transport coupled proton transport"/>
    <property type="evidence" value="ECO:0007669"/>
    <property type="project" value="TreeGrafter"/>
</dbReference>
<dbReference type="Gene3D" id="1.20.5.2700">
    <property type="match status" value="1"/>
</dbReference>
<dbReference type="InterPro" id="IPR002128">
    <property type="entry name" value="NADH_UbQ_OxRdtase_chlpt_su5_C"/>
</dbReference>
<dbReference type="InterPro" id="IPR018393">
    <property type="entry name" value="NADHpl_OxRdtase_5_subgr"/>
</dbReference>
<dbReference type="InterPro" id="IPR001750">
    <property type="entry name" value="ND/Mrp_TM"/>
</dbReference>
<dbReference type="InterPro" id="IPR003945">
    <property type="entry name" value="NU5C-like"/>
</dbReference>
<dbReference type="InterPro" id="IPR001516">
    <property type="entry name" value="Proton_antipo_N"/>
</dbReference>
<dbReference type="NCBIfam" id="TIGR01974">
    <property type="entry name" value="NDH_I_L"/>
    <property type="match status" value="1"/>
</dbReference>
<dbReference type="NCBIfam" id="NF005141">
    <property type="entry name" value="PRK06590.1"/>
    <property type="match status" value="1"/>
</dbReference>
<dbReference type="PANTHER" id="PTHR42829">
    <property type="entry name" value="NADH-UBIQUINONE OXIDOREDUCTASE CHAIN 5"/>
    <property type="match status" value="1"/>
</dbReference>
<dbReference type="PANTHER" id="PTHR42829:SF2">
    <property type="entry name" value="NADH-UBIQUINONE OXIDOREDUCTASE CHAIN 5"/>
    <property type="match status" value="1"/>
</dbReference>
<dbReference type="Pfam" id="PF01010">
    <property type="entry name" value="Proton_antipo_C"/>
    <property type="match status" value="1"/>
</dbReference>
<dbReference type="Pfam" id="PF00361">
    <property type="entry name" value="Proton_antipo_M"/>
    <property type="match status" value="1"/>
</dbReference>
<dbReference type="Pfam" id="PF00662">
    <property type="entry name" value="Proton_antipo_N"/>
    <property type="match status" value="1"/>
</dbReference>
<dbReference type="PRINTS" id="PR01434">
    <property type="entry name" value="NADHDHGNASE5"/>
</dbReference>
<dbReference type="PRINTS" id="PR01435">
    <property type="entry name" value="NPOXDRDTASE5"/>
</dbReference>
<accession>B0Z4S2</accession>
<organism>
    <name type="scientific">Oenothera argillicola</name>
    <name type="common">Appalachian evening primrose</name>
    <dbReference type="NCBI Taxonomy" id="3940"/>
    <lineage>
        <taxon>Eukaryota</taxon>
        <taxon>Viridiplantae</taxon>
        <taxon>Streptophyta</taxon>
        <taxon>Embryophyta</taxon>
        <taxon>Tracheophyta</taxon>
        <taxon>Spermatophyta</taxon>
        <taxon>Magnoliopsida</taxon>
        <taxon>eudicotyledons</taxon>
        <taxon>Gunneridae</taxon>
        <taxon>Pentapetalae</taxon>
        <taxon>rosids</taxon>
        <taxon>malvids</taxon>
        <taxon>Myrtales</taxon>
        <taxon>Onagraceae</taxon>
        <taxon>Onagroideae</taxon>
        <taxon>Onagreae</taxon>
        <taxon>Oenothera</taxon>
    </lineage>
</organism>
<sequence>MEYTYQYSWIIPFIPLPVPILIGMGLLLFPTATKNHRRVWSFPSILLLSMVMLLSVYLSIQQINRSFIYQYVWSWTINNDFSLEFGHLIDPLASIMLILITTVGILVLFYSDNYMSHDQGYLRFFAYLSFFNTSMLGLVTSSNLIQIYIFWELVGMCSYLLIGFWFTRPIAATACQKAFVTNRVGDFGLLLGILGLYWITGSFEFRDLFEIVNNLIDNNNQVHFLFVTLCSFLLFAGAVAKSAQFPLHVWLPDAMEGPTPISALIHAATMVAAGIFLVARLLPLFVITPYIMNLISLIGIITVLLGATLALAQKDIKRSLAYSTMSQLGYMMLALGMGSYRAALFHLITHAYSKALLFLGSGSIIHSMESIVGYSPDKSQNMVLMGGLKKHVPITKTAFLVGTLSLCGIPPLACFWSKDEILNDSWLYSPIFAIIACSTAGFTAFYMFRVYLLTFDGHLNVHFQNYSGQKSSSVYSISLWGKQVPKRIQNPFCLLNLLTMNNNESTSFFWNNKCKLDGNVKKRIRPFITVTHFPNRKTFSYPHESDNTMLFSLFVLVLFTLFVAAIGIPFNQEGSDCDILSKLLNPSINLLHQNSNNFTDWYEFVTNASFSVSIALLGIFIATFLYKPIYSSLQNFNLLNSFYKRSANRVMWDKIQNWIYDWSYNRGYIDSFYTISLTGGIRGLAELSHFFDRRVIDGILNGFGLTSFFLGESLKYFGGGRISSYLLLYSIFIFIFLLMDSFFTNLPFFVLCQFLDSSFSMSISGFLLYENF</sequence>
<name>NU5C_OENAR</name>